<gene>
    <name evidence="1" type="primary">alaS</name>
    <name type="ordered locus">SPAB_03515</name>
</gene>
<name>SYA_SALPB</name>
<protein>
    <recommendedName>
        <fullName evidence="1">Alanine--tRNA ligase</fullName>
        <ecNumber evidence="1">6.1.1.7</ecNumber>
    </recommendedName>
    <alternativeName>
        <fullName evidence="1">Alanyl-tRNA synthetase</fullName>
        <shortName evidence="1">AlaRS</shortName>
    </alternativeName>
</protein>
<evidence type="ECO:0000255" key="1">
    <source>
        <dbReference type="HAMAP-Rule" id="MF_00036"/>
    </source>
</evidence>
<sequence length="876" mass="95885">MSKSTAEIRQAFLDFFHSKGHQVVASSSLVPNNDPTLLFTNAGMNQFKDVFLGLDKRNYSRATTSQRCVRAGGKHNDLENVGYTARHHTFFEMLGNFSFGDYFKHDAIQFAWELLTGENWFALPKERLWVTVYETDDEAYEIWEKEVGIPRERIIRIGDNKGAPYASDNFWQMGDTGPCGPCTEIFYDHGDHIWGGPPGSPEEDGDRYIEIWNIVFMQFNRQADGAMEPLPKPSVDTGMGLERIAAVLQHVNSNYDIDLFRTLIEAVAKVTGATDLGNKSLRVIADHIRSCAFLVADGVLPSNENRGYVLRRIIRRAVRHGNMLGAKETFFYKLVGPLIEVMGSAGEELKRQQAQVEQVLKTEEEQFARTLERGLALLDEELAKLQGDTLDGETAFRLYDTYGFPVDLTADVCRERNIKVDEAGFEAAMEEQRRRAREASGFGADYNAMIRVDSASEFKGYDHLELNGKVTALFVDGKAVEAINAGQEAVVVLDQTPFYAESGGQVGDKGELKGAGFTFSVDDTQKYGQAIGHLGKLSAGALKVGDAVQADVDEARRARIRLNHSATHLMHAALRQVLGTHVAQKGSLVSDKVLRFDFSHNEAMKPSEIREVEDLVNAQIRRNLPIETNIMDLDAAKAKGAMALFGEKYDERVRVLSMGDFSTELCGGTHASRTGDIGLFRIISESGTAAGIRRIEAVTGEGAMATVHAQSDRLNDIAHLLKGDSQNLGDKVRAVLERTRQLEKELQQLKDQAAAQESANLSSKAVDLNGVKLLVSELAGIEPKMLRTMVDDLKNQLGSTVIVLATVVEGKVSLIAGVSKDVTDRVKAGELIGMVAQQVGGKGGGRPDMAQAGGTDAAALPAALASVQGWVSAKLQ</sequence>
<organism>
    <name type="scientific">Salmonella paratyphi B (strain ATCC BAA-1250 / SPB7)</name>
    <dbReference type="NCBI Taxonomy" id="1016998"/>
    <lineage>
        <taxon>Bacteria</taxon>
        <taxon>Pseudomonadati</taxon>
        <taxon>Pseudomonadota</taxon>
        <taxon>Gammaproteobacteria</taxon>
        <taxon>Enterobacterales</taxon>
        <taxon>Enterobacteriaceae</taxon>
        <taxon>Salmonella</taxon>
    </lineage>
</organism>
<proteinExistence type="inferred from homology"/>
<feature type="chain" id="PRO_0000347778" description="Alanine--tRNA ligase">
    <location>
        <begin position="1"/>
        <end position="876"/>
    </location>
</feature>
<feature type="binding site" evidence="1">
    <location>
        <position position="564"/>
    </location>
    <ligand>
        <name>Zn(2+)</name>
        <dbReference type="ChEBI" id="CHEBI:29105"/>
    </ligand>
</feature>
<feature type="binding site" evidence="1">
    <location>
        <position position="568"/>
    </location>
    <ligand>
        <name>Zn(2+)</name>
        <dbReference type="ChEBI" id="CHEBI:29105"/>
    </ligand>
</feature>
<feature type="binding site" evidence="1">
    <location>
        <position position="666"/>
    </location>
    <ligand>
        <name>Zn(2+)</name>
        <dbReference type="ChEBI" id="CHEBI:29105"/>
    </ligand>
</feature>
<feature type="binding site" evidence="1">
    <location>
        <position position="670"/>
    </location>
    <ligand>
        <name>Zn(2+)</name>
        <dbReference type="ChEBI" id="CHEBI:29105"/>
    </ligand>
</feature>
<keyword id="KW-0030">Aminoacyl-tRNA synthetase</keyword>
<keyword id="KW-0067">ATP-binding</keyword>
<keyword id="KW-0963">Cytoplasm</keyword>
<keyword id="KW-0436">Ligase</keyword>
<keyword id="KW-0479">Metal-binding</keyword>
<keyword id="KW-0547">Nucleotide-binding</keyword>
<keyword id="KW-0648">Protein biosynthesis</keyword>
<keyword id="KW-0694">RNA-binding</keyword>
<keyword id="KW-0820">tRNA-binding</keyword>
<keyword id="KW-0862">Zinc</keyword>
<dbReference type="EC" id="6.1.1.7" evidence="1"/>
<dbReference type="EMBL" id="CP000886">
    <property type="protein sequence ID" value="ABX68856.1"/>
    <property type="molecule type" value="Genomic_DNA"/>
</dbReference>
<dbReference type="RefSeq" id="WP_000047217.1">
    <property type="nucleotide sequence ID" value="NC_010102.1"/>
</dbReference>
<dbReference type="SMR" id="A9N0C1"/>
<dbReference type="KEGG" id="spq:SPAB_03515"/>
<dbReference type="PATRIC" id="fig|1016998.12.peg.3307"/>
<dbReference type="HOGENOM" id="CLU_004485_1_1_6"/>
<dbReference type="BioCyc" id="SENT1016998:SPAB_RS14315-MONOMER"/>
<dbReference type="Proteomes" id="UP000008556">
    <property type="component" value="Chromosome"/>
</dbReference>
<dbReference type="GO" id="GO:0005829">
    <property type="term" value="C:cytosol"/>
    <property type="evidence" value="ECO:0007669"/>
    <property type="project" value="TreeGrafter"/>
</dbReference>
<dbReference type="GO" id="GO:0004813">
    <property type="term" value="F:alanine-tRNA ligase activity"/>
    <property type="evidence" value="ECO:0007669"/>
    <property type="project" value="UniProtKB-UniRule"/>
</dbReference>
<dbReference type="GO" id="GO:0002161">
    <property type="term" value="F:aminoacyl-tRNA deacylase activity"/>
    <property type="evidence" value="ECO:0007669"/>
    <property type="project" value="TreeGrafter"/>
</dbReference>
<dbReference type="GO" id="GO:0005524">
    <property type="term" value="F:ATP binding"/>
    <property type="evidence" value="ECO:0007669"/>
    <property type="project" value="UniProtKB-UniRule"/>
</dbReference>
<dbReference type="GO" id="GO:0000049">
    <property type="term" value="F:tRNA binding"/>
    <property type="evidence" value="ECO:0007669"/>
    <property type="project" value="UniProtKB-KW"/>
</dbReference>
<dbReference type="GO" id="GO:0008270">
    <property type="term" value="F:zinc ion binding"/>
    <property type="evidence" value="ECO:0007669"/>
    <property type="project" value="UniProtKB-UniRule"/>
</dbReference>
<dbReference type="GO" id="GO:0006419">
    <property type="term" value="P:alanyl-tRNA aminoacylation"/>
    <property type="evidence" value="ECO:0007669"/>
    <property type="project" value="UniProtKB-UniRule"/>
</dbReference>
<dbReference type="GO" id="GO:0045892">
    <property type="term" value="P:negative regulation of DNA-templated transcription"/>
    <property type="evidence" value="ECO:0007669"/>
    <property type="project" value="TreeGrafter"/>
</dbReference>
<dbReference type="CDD" id="cd00673">
    <property type="entry name" value="AlaRS_core"/>
    <property type="match status" value="1"/>
</dbReference>
<dbReference type="FunFam" id="2.40.30.130:FF:000001">
    <property type="entry name" value="Alanine--tRNA ligase"/>
    <property type="match status" value="1"/>
</dbReference>
<dbReference type="FunFam" id="3.10.310.40:FF:000001">
    <property type="entry name" value="Alanine--tRNA ligase"/>
    <property type="match status" value="1"/>
</dbReference>
<dbReference type="FunFam" id="3.30.54.20:FF:000001">
    <property type="entry name" value="Alanine--tRNA ligase"/>
    <property type="match status" value="1"/>
</dbReference>
<dbReference type="FunFam" id="3.30.930.10:FF:000004">
    <property type="entry name" value="Alanine--tRNA ligase"/>
    <property type="match status" value="1"/>
</dbReference>
<dbReference type="FunFam" id="3.30.980.10:FF:000004">
    <property type="entry name" value="Alanine--tRNA ligase, cytoplasmic"/>
    <property type="match status" value="1"/>
</dbReference>
<dbReference type="Gene3D" id="2.40.30.130">
    <property type="match status" value="1"/>
</dbReference>
<dbReference type="Gene3D" id="3.10.310.40">
    <property type="match status" value="1"/>
</dbReference>
<dbReference type="Gene3D" id="3.30.54.20">
    <property type="match status" value="1"/>
</dbReference>
<dbReference type="Gene3D" id="6.10.250.550">
    <property type="match status" value="1"/>
</dbReference>
<dbReference type="Gene3D" id="3.30.930.10">
    <property type="entry name" value="Bira Bifunctional Protein, Domain 2"/>
    <property type="match status" value="1"/>
</dbReference>
<dbReference type="Gene3D" id="3.30.980.10">
    <property type="entry name" value="Threonyl-trna Synthetase, Chain A, domain 2"/>
    <property type="match status" value="1"/>
</dbReference>
<dbReference type="HAMAP" id="MF_00036_B">
    <property type="entry name" value="Ala_tRNA_synth_B"/>
    <property type="match status" value="1"/>
</dbReference>
<dbReference type="InterPro" id="IPR045864">
    <property type="entry name" value="aa-tRNA-synth_II/BPL/LPL"/>
</dbReference>
<dbReference type="InterPro" id="IPR002318">
    <property type="entry name" value="Ala-tRNA-lgiase_IIc"/>
</dbReference>
<dbReference type="InterPro" id="IPR018162">
    <property type="entry name" value="Ala-tRNA-ligase_IIc_anticod-bd"/>
</dbReference>
<dbReference type="InterPro" id="IPR018165">
    <property type="entry name" value="Ala-tRNA-synth_IIc_core"/>
</dbReference>
<dbReference type="InterPro" id="IPR018164">
    <property type="entry name" value="Ala-tRNA-synth_IIc_N"/>
</dbReference>
<dbReference type="InterPro" id="IPR050058">
    <property type="entry name" value="Ala-tRNA_ligase"/>
</dbReference>
<dbReference type="InterPro" id="IPR023033">
    <property type="entry name" value="Ala_tRNA_ligase_euk/bac"/>
</dbReference>
<dbReference type="InterPro" id="IPR003156">
    <property type="entry name" value="DHHA1_dom"/>
</dbReference>
<dbReference type="InterPro" id="IPR018163">
    <property type="entry name" value="Thr/Ala-tRNA-synth_IIc_edit"/>
</dbReference>
<dbReference type="InterPro" id="IPR009000">
    <property type="entry name" value="Transl_B-barrel_sf"/>
</dbReference>
<dbReference type="InterPro" id="IPR012947">
    <property type="entry name" value="tRNA_SAD"/>
</dbReference>
<dbReference type="NCBIfam" id="TIGR00344">
    <property type="entry name" value="alaS"/>
    <property type="match status" value="1"/>
</dbReference>
<dbReference type="PANTHER" id="PTHR11777:SF9">
    <property type="entry name" value="ALANINE--TRNA LIGASE, CYTOPLASMIC"/>
    <property type="match status" value="1"/>
</dbReference>
<dbReference type="PANTHER" id="PTHR11777">
    <property type="entry name" value="ALANYL-TRNA SYNTHETASE"/>
    <property type="match status" value="1"/>
</dbReference>
<dbReference type="Pfam" id="PF02272">
    <property type="entry name" value="DHHA1"/>
    <property type="match status" value="1"/>
</dbReference>
<dbReference type="Pfam" id="PF01411">
    <property type="entry name" value="tRNA-synt_2c"/>
    <property type="match status" value="1"/>
</dbReference>
<dbReference type="Pfam" id="PF07973">
    <property type="entry name" value="tRNA_SAD"/>
    <property type="match status" value="1"/>
</dbReference>
<dbReference type="PRINTS" id="PR00980">
    <property type="entry name" value="TRNASYNTHALA"/>
</dbReference>
<dbReference type="SMART" id="SM00863">
    <property type="entry name" value="tRNA_SAD"/>
    <property type="match status" value="1"/>
</dbReference>
<dbReference type="SUPFAM" id="SSF55681">
    <property type="entry name" value="Class II aaRS and biotin synthetases"/>
    <property type="match status" value="1"/>
</dbReference>
<dbReference type="SUPFAM" id="SSF101353">
    <property type="entry name" value="Putative anticodon-binding domain of alanyl-tRNA synthetase (AlaRS)"/>
    <property type="match status" value="1"/>
</dbReference>
<dbReference type="SUPFAM" id="SSF55186">
    <property type="entry name" value="ThrRS/AlaRS common domain"/>
    <property type="match status" value="1"/>
</dbReference>
<dbReference type="SUPFAM" id="SSF50447">
    <property type="entry name" value="Translation proteins"/>
    <property type="match status" value="1"/>
</dbReference>
<dbReference type="PROSITE" id="PS50860">
    <property type="entry name" value="AA_TRNA_LIGASE_II_ALA"/>
    <property type="match status" value="1"/>
</dbReference>
<accession>A9N0C1</accession>
<comment type="function">
    <text evidence="1">Catalyzes the attachment of alanine to tRNA(Ala) in a two-step reaction: alanine is first activated by ATP to form Ala-AMP and then transferred to the acceptor end of tRNA(Ala). Also edits incorrectly charged Ser-tRNA(Ala) and Gly-tRNA(Ala) via its editing domain.</text>
</comment>
<comment type="catalytic activity">
    <reaction evidence="1">
        <text>tRNA(Ala) + L-alanine + ATP = L-alanyl-tRNA(Ala) + AMP + diphosphate</text>
        <dbReference type="Rhea" id="RHEA:12540"/>
        <dbReference type="Rhea" id="RHEA-COMP:9657"/>
        <dbReference type="Rhea" id="RHEA-COMP:9923"/>
        <dbReference type="ChEBI" id="CHEBI:30616"/>
        <dbReference type="ChEBI" id="CHEBI:33019"/>
        <dbReference type="ChEBI" id="CHEBI:57972"/>
        <dbReference type="ChEBI" id="CHEBI:78442"/>
        <dbReference type="ChEBI" id="CHEBI:78497"/>
        <dbReference type="ChEBI" id="CHEBI:456215"/>
        <dbReference type="EC" id="6.1.1.7"/>
    </reaction>
</comment>
<comment type="cofactor">
    <cofactor evidence="1">
        <name>Zn(2+)</name>
        <dbReference type="ChEBI" id="CHEBI:29105"/>
    </cofactor>
    <text evidence="1">Binds 1 zinc ion per subunit.</text>
</comment>
<comment type="subunit">
    <text evidence="1">Homotetramer.</text>
</comment>
<comment type="subcellular location">
    <subcellularLocation>
        <location evidence="1">Cytoplasm</location>
    </subcellularLocation>
</comment>
<comment type="domain">
    <text evidence="1">Consists of three domains; the N-terminal catalytic domain, the editing domain and the C-terminal C-Ala domain. The editing domain removes incorrectly charged amino acids, while the C-Ala domain, along with tRNA(Ala), serves as a bridge to cooperatively bring together the editing and aminoacylation centers thus stimulating deacylation of misacylated tRNAs.</text>
</comment>
<comment type="similarity">
    <text evidence="1">Belongs to the class-II aminoacyl-tRNA synthetase family.</text>
</comment>
<reference key="1">
    <citation type="submission" date="2007-11" db="EMBL/GenBank/DDBJ databases">
        <authorList>
            <consortium name="The Salmonella enterica serovar Paratyphi B Genome Sequencing Project"/>
            <person name="McClelland M."/>
            <person name="Sanderson E.K."/>
            <person name="Porwollik S."/>
            <person name="Spieth J."/>
            <person name="Clifton W.S."/>
            <person name="Fulton R."/>
            <person name="Cordes M."/>
            <person name="Wollam A."/>
            <person name="Shah N."/>
            <person name="Pepin K."/>
            <person name="Bhonagiri V."/>
            <person name="Nash W."/>
            <person name="Johnson M."/>
            <person name="Thiruvilangam P."/>
            <person name="Wilson R."/>
        </authorList>
    </citation>
    <scope>NUCLEOTIDE SEQUENCE [LARGE SCALE GENOMIC DNA]</scope>
    <source>
        <strain>ATCC BAA-1250 / SPB7</strain>
    </source>
</reference>